<protein>
    <recommendedName>
        <fullName evidence="1">Argininosuccinate lyase</fullName>
        <shortName evidence="1">ASAL</shortName>
        <ecNumber evidence="1">4.3.2.1</ecNumber>
    </recommendedName>
    <alternativeName>
        <fullName evidence="1">Arginosuccinase</fullName>
    </alternativeName>
</protein>
<comment type="catalytic activity">
    <reaction evidence="1">
        <text>2-(N(omega)-L-arginino)succinate = fumarate + L-arginine</text>
        <dbReference type="Rhea" id="RHEA:24020"/>
        <dbReference type="ChEBI" id="CHEBI:29806"/>
        <dbReference type="ChEBI" id="CHEBI:32682"/>
        <dbReference type="ChEBI" id="CHEBI:57472"/>
        <dbReference type="EC" id="4.3.2.1"/>
    </reaction>
</comment>
<comment type="pathway">
    <text evidence="1">Amino-acid biosynthesis; L-arginine biosynthesis; L-arginine from L-ornithine and carbamoyl phosphate: step 3/3.</text>
</comment>
<comment type="subcellular location">
    <subcellularLocation>
        <location evidence="1">Cytoplasm</location>
    </subcellularLocation>
</comment>
<comment type="similarity">
    <text evidence="1">Belongs to the lyase 1 family. Argininosuccinate lyase subfamily.</text>
</comment>
<accession>A8AKW2</accession>
<gene>
    <name evidence="1" type="primary">argH</name>
    <name type="ordered locus">CKO_03034</name>
</gene>
<proteinExistence type="inferred from homology"/>
<keyword id="KW-0028">Amino-acid biosynthesis</keyword>
<keyword id="KW-0055">Arginine biosynthesis</keyword>
<keyword id="KW-0963">Cytoplasm</keyword>
<keyword id="KW-0456">Lyase</keyword>
<keyword id="KW-1185">Reference proteome</keyword>
<reference key="1">
    <citation type="submission" date="2007-08" db="EMBL/GenBank/DDBJ databases">
        <authorList>
            <consortium name="The Citrobacter koseri Genome Sequencing Project"/>
            <person name="McClelland M."/>
            <person name="Sanderson E.K."/>
            <person name="Porwollik S."/>
            <person name="Spieth J."/>
            <person name="Clifton W.S."/>
            <person name="Latreille P."/>
            <person name="Courtney L."/>
            <person name="Wang C."/>
            <person name="Pepin K."/>
            <person name="Bhonagiri V."/>
            <person name="Nash W."/>
            <person name="Johnson M."/>
            <person name="Thiruvilangam P."/>
            <person name="Wilson R."/>
        </authorList>
    </citation>
    <scope>NUCLEOTIDE SEQUENCE [LARGE SCALE GENOMIC DNA]</scope>
    <source>
        <strain>ATCC BAA-895 / CDC 4225-83 / SGSC4696</strain>
    </source>
</reference>
<sequence>MALWGGRFTQAADQRFKQFNDSLRFDYRLAEQDIVGSVAWSKALVTVGVLTADEQLQLEEALSALLEEVRVNPQQILESDAEDIHSWVEGKLIDKVGQLGKKLHTGRSRNDQVATDLKLWCKDTVTELLSANRQLQSALVETAQNNQDAVMPGYTHLQRAQPVTFAHWCLAYVEMLARDESRLQDALKRLDVSPLGCGALAGTAYEIDREQLAGWLGFASATRNSLDSVSDRDHVLELLSDASIGMVHLSRFAEDLIFFNTGEAGFVELSDRVTSGSSLMPQKKNPDALELIRGKCGRVQGALTAMMMTLKGLPLAYNKDMQEDKEGLFDALDTWLDCLHMAALVLDGIQVKRPRCQEAAQQGYANATELADYLVAKGVPFREAHHIVGETVVEAIRQGKPLEDLSLADLQKFSAVIGDDVYPILSLQSCLDKRAAKGGVSPQQVAQAIDYAKARLA</sequence>
<dbReference type="EC" id="4.3.2.1" evidence="1"/>
<dbReference type="EMBL" id="CP000822">
    <property type="protein sequence ID" value="ABV14125.1"/>
    <property type="molecule type" value="Genomic_DNA"/>
</dbReference>
<dbReference type="RefSeq" id="WP_012133832.1">
    <property type="nucleotide sequence ID" value="NC_009792.1"/>
</dbReference>
<dbReference type="SMR" id="A8AKW2"/>
<dbReference type="STRING" id="290338.CKO_03034"/>
<dbReference type="GeneID" id="45136842"/>
<dbReference type="KEGG" id="cko:CKO_03034"/>
<dbReference type="HOGENOM" id="CLU_027272_2_3_6"/>
<dbReference type="OrthoDB" id="9769623at2"/>
<dbReference type="UniPathway" id="UPA00068">
    <property type="reaction ID" value="UER00114"/>
</dbReference>
<dbReference type="Proteomes" id="UP000008148">
    <property type="component" value="Chromosome"/>
</dbReference>
<dbReference type="GO" id="GO:0005829">
    <property type="term" value="C:cytosol"/>
    <property type="evidence" value="ECO:0007669"/>
    <property type="project" value="TreeGrafter"/>
</dbReference>
<dbReference type="GO" id="GO:0004056">
    <property type="term" value="F:argininosuccinate lyase activity"/>
    <property type="evidence" value="ECO:0007669"/>
    <property type="project" value="UniProtKB-UniRule"/>
</dbReference>
<dbReference type="GO" id="GO:0042450">
    <property type="term" value="P:arginine biosynthetic process via ornithine"/>
    <property type="evidence" value="ECO:0007669"/>
    <property type="project" value="InterPro"/>
</dbReference>
<dbReference type="GO" id="GO:0006526">
    <property type="term" value="P:L-arginine biosynthetic process"/>
    <property type="evidence" value="ECO:0007669"/>
    <property type="project" value="UniProtKB-UniRule"/>
</dbReference>
<dbReference type="CDD" id="cd01359">
    <property type="entry name" value="Argininosuccinate_lyase"/>
    <property type="match status" value="1"/>
</dbReference>
<dbReference type="FunFam" id="1.10.275.10:FF:000004">
    <property type="entry name" value="Argininosuccinate lyase"/>
    <property type="match status" value="1"/>
</dbReference>
<dbReference type="FunFam" id="1.10.40.30:FF:000001">
    <property type="entry name" value="Argininosuccinate lyase"/>
    <property type="match status" value="1"/>
</dbReference>
<dbReference type="FunFam" id="1.20.200.10:FF:000006">
    <property type="entry name" value="Argininosuccinate lyase"/>
    <property type="match status" value="1"/>
</dbReference>
<dbReference type="Gene3D" id="1.10.40.30">
    <property type="entry name" value="Fumarase/aspartase (C-terminal domain)"/>
    <property type="match status" value="1"/>
</dbReference>
<dbReference type="Gene3D" id="1.20.200.10">
    <property type="entry name" value="Fumarase/aspartase (Central domain)"/>
    <property type="match status" value="1"/>
</dbReference>
<dbReference type="Gene3D" id="1.10.275.10">
    <property type="entry name" value="Fumarase/aspartase (N-terminal domain)"/>
    <property type="match status" value="1"/>
</dbReference>
<dbReference type="HAMAP" id="MF_00006">
    <property type="entry name" value="Arg_succ_lyase"/>
    <property type="match status" value="1"/>
</dbReference>
<dbReference type="InterPro" id="IPR029419">
    <property type="entry name" value="Arg_succ_lyase_C"/>
</dbReference>
<dbReference type="InterPro" id="IPR009049">
    <property type="entry name" value="Argininosuccinate_lyase"/>
</dbReference>
<dbReference type="InterPro" id="IPR024083">
    <property type="entry name" value="Fumarase/histidase_N"/>
</dbReference>
<dbReference type="InterPro" id="IPR020557">
    <property type="entry name" value="Fumarate_lyase_CS"/>
</dbReference>
<dbReference type="InterPro" id="IPR000362">
    <property type="entry name" value="Fumarate_lyase_fam"/>
</dbReference>
<dbReference type="InterPro" id="IPR022761">
    <property type="entry name" value="Fumarate_lyase_N"/>
</dbReference>
<dbReference type="InterPro" id="IPR008948">
    <property type="entry name" value="L-Aspartase-like"/>
</dbReference>
<dbReference type="NCBIfam" id="TIGR00838">
    <property type="entry name" value="argH"/>
    <property type="match status" value="1"/>
</dbReference>
<dbReference type="NCBIfam" id="NF008964">
    <property type="entry name" value="PRK12308.1"/>
    <property type="match status" value="1"/>
</dbReference>
<dbReference type="PANTHER" id="PTHR43814">
    <property type="entry name" value="ARGININOSUCCINATE LYASE"/>
    <property type="match status" value="1"/>
</dbReference>
<dbReference type="PANTHER" id="PTHR43814:SF1">
    <property type="entry name" value="ARGININOSUCCINATE LYASE"/>
    <property type="match status" value="1"/>
</dbReference>
<dbReference type="Pfam" id="PF14698">
    <property type="entry name" value="ASL_C2"/>
    <property type="match status" value="1"/>
</dbReference>
<dbReference type="Pfam" id="PF00206">
    <property type="entry name" value="Lyase_1"/>
    <property type="match status" value="1"/>
</dbReference>
<dbReference type="PRINTS" id="PR00145">
    <property type="entry name" value="ARGSUCLYASE"/>
</dbReference>
<dbReference type="PRINTS" id="PR00149">
    <property type="entry name" value="FUMRATELYASE"/>
</dbReference>
<dbReference type="SUPFAM" id="SSF48557">
    <property type="entry name" value="L-aspartase-like"/>
    <property type="match status" value="1"/>
</dbReference>
<dbReference type="PROSITE" id="PS00163">
    <property type="entry name" value="FUMARATE_LYASES"/>
    <property type="match status" value="1"/>
</dbReference>
<evidence type="ECO:0000255" key="1">
    <source>
        <dbReference type="HAMAP-Rule" id="MF_00006"/>
    </source>
</evidence>
<name>ARLY_CITK8</name>
<organism>
    <name type="scientific">Citrobacter koseri (strain ATCC BAA-895 / CDC 4225-83 / SGSC4696)</name>
    <dbReference type="NCBI Taxonomy" id="290338"/>
    <lineage>
        <taxon>Bacteria</taxon>
        <taxon>Pseudomonadati</taxon>
        <taxon>Pseudomonadota</taxon>
        <taxon>Gammaproteobacteria</taxon>
        <taxon>Enterobacterales</taxon>
        <taxon>Enterobacteriaceae</taxon>
        <taxon>Citrobacter</taxon>
    </lineage>
</organism>
<feature type="chain" id="PRO_1000000466" description="Argininosuccinate lyase">
    <location>
        <begin position="1"/>
        <end position="457"/>
    </location>
</feature>